<proteinExistence type="evidence at transcript level"/>
<accession>Q9FAS7</accession>
<feature type="chain" id="PRO_0000098058" description="Urease subunit gamma">
    <location>
        <begin position="1"/>
        <end position="100"/>
    </location>
</feature>
<gene>
    <name evidence="1" type="primary">ureA</name>
</gene>
<organism>
    <name type="scientific">Vibrio parahaemolyticus</name>
    <dbReference type="NCBI Taxonomy" id="670"/>
    <lineage>
        <taxon>Bacteria</taxon>
        <taxon>Pseudomonadati</taxon>
        <taxon>Pseudomonadota</taxon>
        <taxon>Gammaproteobacteria</taxon>
        <taxon>Vibrionales</taxon>
        <taxon>Vibrionaceae</taxon>
        <taxon>Vibrio</taxon>
    </lineage>
</organism>
<dbReference type="EC" id="3.5.1.5" evidence="1"/>
<dbReference type="EMBL" id="AB455531">
    <property type="protein sequence ID" value="BAB13786.1"/>
    <property type="molecule type" value="Genomic_DNA"/>
</dbReference>
<dbReference type="RefSeq" id="WP_005499469.1">
    <property type="nucleotide sequence ID" value="NZ_WWPK01000023.1"/>
</dbReference>
<dbReference type="SMR" id="Q9FAS7"/>
<dbReference type="UniPathway" id="UPA00258">
    <property type="reaction ID" value="UER00370"/>
</dbReference>
<dbReference type="GO" id="GO:0005737">
    <property type="term" value="C:cytoplasm"/>
    <property type="evidence" value="ECO:0007669"/>
    <property type="project" value="UniProtKB-SubCell"/>
</dbReference>
<dbReference type="GO" id="GO:0016151">
    <property type="term" value="F:nickel cation binding"/>
    <property type="evidence" value="ECO:0007669"/>
    <property type="project" value="InterPro"/>
</dbReference>
<dbReference type="GO" id="GO:0009039">
    <property type="term" value="F:urease activity"/>
    <property type="evidence" value="ECO:0007669"/>
    <property type="project" value="UniProtKB-UniRule"/>
</dbReference>
<dbReference type="GO" id="GO:0043419">
    <property type="term" value="P:urea catabolic process"/>
    <property type="evidence" value="ECO:0007669"/>
    <property type="project" value="UniProtKB-UniRule"/>
</dbReference>
<dbReference type="CDD" id="cd00390">
    <property type="entry name" value="Urease_gamma"/>
    <property type="match status" value="1"/>
</dbReference>
<dbReference type="Gene3D" id="3.30.280.10">
    <property type="entry name" value="Urease, gamma-like subunit"/>
    <property type="match status" value="1"/>
</dbReference>
<dbReference type="HAMAP" id="MF_00739">
    <property type="entry name" value="Urease_gamma"/>
    <property type="match status" value="1"/>
</dbReference>
<dbReference type="InterPro" id="IPR012010">
    <property type="entry name" value="Urease_gamma"/>
</dbReference>
<dbReference type="InterPro" id="IPR002026">
    <property type="entry name" value="Urease_gamma/gamma-beta_su"/>
</dbReference>
<dbReference type="InterPro" id="IPR036463">
    <property type="entry name" value="Urease_gamma_sf"/>
</dbReference>
<dbReference type="InterPro" id="IPR050069">
    <property type="entry name" value="Urease_subunit"/>
</dbReference>
<dbReference type="NCBIfam" id="NF009712">
    <property type="entry name" value="PRK13241.1"/>
    <property type="match status" value="1"/>
</dbReference>
<dbReference type="NCBIfam" id="TIGR00193">
    <property type="entry name" value="urease_gam"/>
    <property type="match status" value="1"/>
</dbReference>
<dbReference type="PANTHER" id="PTHR33569">
    <property type="entry name" value="UREASE"/>
    <property type="match status" value="1"/>
</dbReference>
<dbReference type="PANTHER" id="PTHR33569:SF1">
    <property type="entry name" value="UREASE"/>
    <property type="match status" value="1"/>
</dbReference>
<dbReference type="Pfam" id="PF00547">
    <property type="entry name" value="Urease_gamma"/>
    <property type="match status" value="1"/>
</dbReference>
<dbReference type="PIRSF" id="PIRSF001223">
    <property type="entry name" value="Urease_gamma"/>
    <property type="match status" value="1"/>
</dbReference>
<dbReference type="SUPFAM" id="SSF54111">
    <property type="entry name" value="Urease, gamma-subunit"/>
    <property type="match status" value="1"/>
</dbReference>
<keyword id="KW-0963">Cytoplasm</keyword>
<keyword id="KW-0378">Hydrolase</keyword>
<name>URE3_VIBPH</name>
<comment type="catalytic activity">
    <reaction evidence="1">
        <text>urea + 2 H2O + H(+) = hydrogencarbonate + 2 NH4(+)</text>
        <dbReference type="Rhea" id="RHEA:20557"/>
        <dbReference type="ChEBI" id="CHEBI:15377"/>
        <dbReference type="ChEBI" id="CHEBI:15378"/>
        <dbReference type="ChEBI" id="CHEBI:16199"/>
        <dbReference type="ChEBI" id="CHEBI:17544"/>
        <dbReference type="ChEBI" id="CHEBI:28938"/>
        <dbReference type="EC" id="3.5.1.5"/>
    </reaction>
</comment>
<comment type="pathway">
    <text evidence="1">Nitrogen metabolism; urea degradation; CO(2) and NH(3) from urea (urease route): step 1/1.</text>
</comment>
<comment type="subunit">
    <text evidence="1">Heterotrimer of UreA (gamma), UreB (beta) and UreC (alpha) subunits. Three heterotrimers associate to form the active enzyme.</text>
</comment>
<comment type="subcellular location">
    <subcellularLocation>
        <location evidence="1">Cytoplasm</location>
    </subcellularLocation>
</comment>
<comment type="induction">
    <text evidence="2">By urea.</text>
</comment>
<comment type="similarity">
    <text evidence="1">Belongs to the urease gamma subunit family.</text>
</comment>
<sequence length="100" mass="11121">MELTPREKDKLLLFTAGLVAERRRARGLKLNYPEAIALISCEIMEGARDGRTVAELMSYGRTILTAEDVMEGVPEMITDIQVECTFPDGTKLVSIHDPIV</sequence>
<reference key="1">
    <citation type="journal article" date="2000" name="Infect. Immun.">
        <title>Genetic characterization of DNA region containing the trh and ure genes of Vibrio parahaemolyticus.</title>
        <authorList>
            <person name="Park K.-S."/>
            <person name="Iida T."/>
            <person name="Yamaichi Y."/>
            <person name="Oyagi T."/>
            <person name="Yamamoto K."/>
            <person name="Honda T."/>
        </authorList>
    </citation>
    <scope>NUCLEOTIDE SEQUENCE [GENOMIC DNA]</scope>
    <scope>INDUCTION</scope>
    <source>
        <strain>TH3996</strain>
    </source>
</reference>
<reference key="2">
    <citation type="journal article" date="2009" name="Infect. Immun.">
        <title>Identification and characterization of a novel type III secretion system in trh-positive Vibrio parahaemolyticus strain TH3996 reveal genetic lineage and diversity of pathogenic machinery beyond the species level.</title>
        <authorList>
            <person name="Okada N."/>
            <person name="Iida T."/>
            <person name="Park K.-S."/>
            <person name="Goto N."/>
            <person name="Yasunaga T."/>
            <person name="Hiyoshi H."/>
            <person name="Matsuda S."/>
            <person name="Kodama T."/>
            <person name="Honda T."/>
        </authorList>
    </citation>
    <scope>NUCLEOTIDE SEQUENCE [GENOMIC DNA]</scope>
    <source>
        <strain>TH3996</strain>
    </source>
</reference>
<evidence type="ECO:0000255" key="1">
    <source>
        <dbReference type="HAMAP-Rule" id="MF_00739"/>
    </source>
</evidence>
<evidence type="ECO:0000269" key="2">
    <source>
    </source>
</evidence>
<protein>
    <recommendedName>
        <fullName evidence="1">Urease subunit gamma</fullName>
        <ecNumber evidence="1">3.5.1.5</ecNumber>
    </recommendedName>
    <alternativeName>
        <fullName evidence="1">Urea amidohydrolase subunit gamma</fullName>
    </alternativeName>
</protein>